<accession>Q8PQI0</accession>
<gene>
    <name evidence="1" type="primary">ilvD</name>
    <name type="ordered locus">XAC0345</name>
</gene>
<sequence>MPEYRSKTSTHGRNMAGARALWRATGMRDGDFHKPIIAIANSFTQFVPGHVHLKDLGQLVAREIERVGGVAKEFDTIAVDDGIAMGHDGMLYSLPSREIIADSVEYMVNAHCADALVCISNCDKITPGMLMAALRLNIPTVFVSGGPMEAGKTKLAEHKLDLIDAMVIAADDSASDEKVAEFERSACPTCGSCSGMFTANSMNCLTEALGLSLPGNGTVVATHADREQLFLRAGRVAVELCHRWYGGEDPTALPRGIATFEAFENAMTLDIAMGGSTNTILHLLAAAQEGEVAFGMQDIDRLSKRVPQLCKVAPNTPKYHIEDVHRAGGIMAILGELARGGLLHTNAATVHARTLADAIAQWDVTQTDDENVHTFYKAGPAGIPTQIAFSQATRWDSLDTDRSDGCIRDVAHAFSQEGGLAVLYGNIARDGCVVKTAGVDESIHVFEGTARVFESQDAAVKGILADEVVAGDVVVIRYEGPKGGPGMQEMLYPTSYLKSKGLGKQCALLTDGRFSGGTSGLSIGHASPEAAAGGAIGLVREGDRILIDIPNRSINLLISDEELALRRAEQDAKGWKPVEVRPRKVTTALKAYALLATSADKGAVRDKALLDG</sequence>
<protein>
    <recommendedName>
        <fullName evidence="1">Dihydroxy-acid dehydratase</fullName>
        <shortName evidence="1">DAD</shortName>
        <ecNumber evidence="1">4.2.1.9</ecNumber>
    </recommendedName>
</protein>
<comment type="function">
    <text evidence="1">Functions in the biosynthesis of branched-chain amino acids. Catalyzes the dehydration of (2R,3R)-2,3-dihydroxy-3-methylpentanoate (2,3-dihydroxy-3-methylvalerate) into 2-oxo-3-methylpentanoate (2-oxo-3-methylvalerate) and of (2R)-2,3-dihydroxy-3-methylbutanoate (2,3-dihydroxyisovalerate) into 2-oxo-3-methylbutanoate (2-oxoisovalerate), the penultimate precursor to L-isoleucine and L-valine, respectively.</text>
</comment>
<comment type="catalytic activity">
    <reaction evidence="1">
        <text>(2R)-2,3-dihydroxy-3-methylbutanoate = 3-methyl-2-oxobutanoate + H2O</text>
        <dbReference type="Rhea" id="RHEA:24809"/>
        <dbReference type="ChEBI" id="CHEBI:11851"/>
        <dbReference type="ChEBI" id="CHEBI:15377"/>
        <dbReference type="ChEBI" id="CHEBI:49072"/>
        <dbReference type="EC" id="4.2.1.9"/>
    </reaction>
    <physiologicalReaction direction="left-to-right" evidence="1">
        <dbReference type="Rhea" id="RHEA:24810"/>
    </physiologicalReaction>
</comment>
<comment type="catalytic activity">
    <reaction evidence="1">
        <text>(2R,3R)-2,3-dihydroxy-3-methylpentanoate = (S)-3-methyl-2-oxopentanoate + H2O</text>
        <dbReference type="Rhea" id="RHEA:27694"/>
        <dbReference type="ChEBI" id="CHEBI:15377"/>
        <dbReference type="ChEBI" id="CHEBI:35146"/>
        <dbReference type="ChEBI" id="CHEBI:49258"/>
        <dbReference type="EC" id="4.2.1.9"/>
    </reaction>
    <physiologicalReaction direction="left-to-right" evidence="1">
        <dbReference type="Rhea" id="RHEA:27695"/>
    </physiologicalReaction>
</comment>
<comment type="cofactor">
    <cofactor evidence="1">
        <name>[2Fe-2S] cluster</name>
        <dbReference type="ChEBI" id="CHEBI:190135"/>
    </cofactor>
    <text evidence="1">Binds 1 [2Fe-2S] cluster per subunit. This cluster acts as a Lewis acid cofactor.</text>
</comment>
<comment type="cofactor">
    <cofactor evidence="1">
        <name>Mg(2+)</name>
        <dbReference type="ChEBI" id="CHEBI:18420"/>
    </cofactor>
</comment>
<comment type="pathway">
    <text evidence="1">Amino-acid biosynthesis; L-isoleucine biosynthesis; L-isoleucine from 2-oxobutanoate: step 3/4.</text>
</comment>
<comment type="pathway">
    <text evidence="1">Amino-acid biosynthesis; L-valine biosynthesis; L-valine from pyruvate: step 3/4.</text>
</comment>
<comment type="subunit">
    <text evidence="1">Homodimer.</text>
</comment>
<comment type="similarity">
    <text evidence="1">Belongs to the IlvD/Edd family.</text>
</comment>
<feature type="chain" id="PRO_0000103531" description="Dihydroxy-acid dehydratase">
    <location>
        <begin position="1"/>
        <end position="612"/>
    </location>
</feature>
<feature type="active site" description="Proton acceptor" evidence="1">
    <location>
        <position position="515"/>
    </location>
</feature>
<feature type="binding site" evidence="1">
    <location>
        <position position="81"/>
    </location>
    <ligand>
        <name>Mg(2+)</name>
        <dbReference type="ChEBI" id="CHEBI:18420"/>
    </ligand>
</feature>
<feature type="binding site" evidence="1">
    <location>
        <position position="122"/>
    </location>
    <ligand>
        <name>[2Fe-2S] cluster</name>
        <dbReference type="ChEBI" id="CHEBI:190135"/>
    </ligand>
</feature>
<feature type="binding site" evidence="1">
    <location>
        <position position="123"/>
    </location>
    <ligand>
        <name>Mg(2+)</name>
        <dbReference type="ChEBI" id="CHEBI:18420"/>
    </ligand>
</feature>
<feature type="binding site" description="via carbamate group" evidence="1">
    <location>
        <position position="124"/>
    </location>
    <ligand>
        <name>Mg(2+)</name>
        <dbReference type="ChEBI" id="CHEBI:18420"/>
    </ligand>
</feature>
<feature type="binding site" evidence="1">
    <location>
        <position position="193"/>
    </location>
    <ligand>
        <name>[2Fe-2S] cluster</name>
        <dbReference type="ChEBI" id="CHEBI:190135"/>
    </ligand>
</feature>
<feature type="binding site" evidence="1">
    <location>
        <position position="489"/>
    </location>
    <ligand>
        <name>Mg(2+)</name>
        <dbReference type="ChEBI" id="CHEBI:18420"/>
    </ligand>
</feature>
<feature type="modified residue" description="N6-carboxylysine" evidence="1">
    <location>
        <position position="124"/>
    </location>
</feature>
<name>ILVD_XANAC</name>
<organism>
    <name type="scientific">Xanthomonas axonopodis pv. citri (strain 306)</name>
    <dbReference type="NCBI Taxonomy" id="190486"/>
    <lineage>
        <taxon>Bacteria</taxon>
        <taxon>Pseudomonadati</taxon>
        <taxon>Pseudomonadota</taxon>
        <taxon>Gammaproteobacteria</taxon>
        <taxon>Lysobacterales</taxon>
        <taxon>Lysobacteraceae</taxon>
        <taxon>Xanthomonas</taxon>
    </lineage>
</organism>
<proteinExistence type="inferred from homology"/>
<evidence type="ECO:0000255" key="1">
    <source>
        <dbReference type="HAMAP-Rule" id="MF_00012"/>
    </source>
</evidence>
<reference key="1">
    <citation type="journal article" date="2002" name="Nature">
        <title>Comparison of the genomes of two Xanthomonas pathogens with differing host specificities.</title>
        <authorList>
            <person name="da Silva A.C.R."/>
            <person name="Ferro J.A."/>
            <person name="Reinach F.C."/>
            <person name="Farah C.S."/>
            <person name="Furlan L.R."/>
            <person name="Quaggio R.B."/>
            <person name="Monteiro-Vitorello C.B."/>
            <person name="Van Sluys M.A."/>
            <person name="Almeida N.F. Jr."/>
            <person name="Alves L.M.C."/>
            <person name="do Amaral A.M."/>
            <person name="Bertolini M.C."/>
            <person name="Camargo L.E.A."/>
            <person name="Camarotte G."/>
            <person name="Cannavan F."/>
            <person name="Cardozo J."/>
            <person name="Chambergo F."/>
            <person name="Ciapina L.P."/>
            <person name="Cicarelli R.M.B."/>
            <person name="Coutinho L.L."/>
            <person name="Cursino-Santos J.R."/>
            <person name="El-Dorry H."/>
            <person name="Faria J.B."/>
            <person name="Ferreira A.J.S."/>
            <person name="Ferreira R.C.C."/>
            <person name="Ferro M.I.T."/>
            <person name="Formighieri E.F."/>
            <person name="Franco M.C."/>
            <person name="Greggio C.C."/>
            <person name="Gruber A."/>
            <person name="Katsuyama A.M."/>
            <person name="Kishi L.T."/>
            <person name="Leite R.P."/>
            <person name="Lemos E.G.M."/>
            <person name="Lemos M.V.F."/>
            <person name="Locali E.C."/>
            <person name="Machado M.A."/>
            <person name="Madeira A.M.B.N."/>
            <person name="Martinez-Rossi N.M."/>
            <person name="Martins E.C."/>
            <person name="Meidanis J."/>
            <person name="Menck C.F.M."/>
            <person name="Miyaki C.Y."/>
            <person name="Moon D.H."/>
            <person name="Moreira L.M."/>
            <person name="Novo M.T.M."/>
            <person name="Okura V.K."/>
            <person name="Oliveira M.C."/>
            <person name="Oliveira V.R."/>
            <person name="Pereira H.A."/>
            <person name="Rossi A."/>
            <person name="Sena J.A.D."/>
            <person name="Silva C."/>
            <person name="de Souza R.F."/>
            <person name="Spinola L.A.F."/>
            <person name="Takita M.A."/>
            <person name="Tamura R.E."/>
            <person name="Teixeira E.C."/>
            <person name="Tezza R.I.D."/>
            <person name="Trindade dos Santos M."/>
            <person name="Truffi D."/>
            <person name="Tsai S.M."/>
            <person name="White F.F."/>
            <person name="Setubal J.C."/>
            <person name="Kitajima J.P."/>
        </authorList>
    </citation>
    <scope>NUCLEOTIDE SEQUENCE [LARGE SCALE GENOMIC DNA]</scope>
    <source>
        <strain>306</strain>
    </source>
</reference>
<dbReference type="EC" id="4.2.1.9" evidence="1"/>
<dbReference type="EMBL" id="AE008923">
    <property type="protein sequence ID" value="AAM35237.1"/>
    <property type="molecule type" value="Genomic_DNA"/>
</dbReference>
<dbReference type="RefSeq" id="WP_011050257.1">
    <property type="nucleotide sequence ID" value="NC_003919.1"/>
</dbReference>
<dbReference type="SMR" id="Q8PQI0"/>
<dbReference type="GeneID" id="66909559"/>
<dbReference type="KEGG" id="xac:XAC0345"/>
<dbReference type="eggNOG" id="COG0129">
    <property type="taxonomic scope" value="Bacteria"/>
</dbReference>
<dbReference type="HOGENOM" id="CLU_014271_4_2_6"/>
<dbReference type="UniPathway" id="UPA00047">
    <property type="reaction ID" value="UER00057"/>
</dbReference>
<dbReference type="UniPathway" id="UPA00049">
    <property type="reaction ID" value="UER00061"/>
</dbReference>
<dbReference type="Proteomes" id="UP000000576">
    <property type="component" value="Chromosome"/>
</dbReference>
<dbReference type="GO" id="GO:0005829">
    <property type="term" value="C:cytosol"/>
    <property type="evidence" value="ECO:0007669"/>
    <property type="project" value="TreeGrafter"/>
</dbReference>
<dbReference type="GO" id="GO:0051537">
    <property type="term" value="F:2 iron, 2 sulfur cluster binding"/>
    <property type="evidence" value="ECO:0007669"/>
    <property type="project" value="UniProtKB-UniRule"/>
</dbReference>
<dbReference type="GO" id="GO:0004160">
    <property type="term" value="F:dihydroxy-acid dehydratase activity"/>
    <property type="evidence" value="ECO:0007669"/>
    <property type="project" value="UniProtKB-UniRule"/>
</dbReference>
<dbReference type="GO" id="GO:0000287">
    <property type="term" value="F:magnesium ion binding"/>
    <property type="evidence" value="ECO:0007669"/>
    <property type="project" value="UniProtKB-UniRule"/>
</dbReference>
<dbReference type="GO" id="GO:0009097">
    <property type="term" value="P:isoleucine biosynthetic process"/>
    <property type="evidence" value="ECO:0007669"/>
    <property type="project" value="UniProtKB-UniRule"/>
</dbReference>
<dbReference type="GO" id="GO:0009099">
    <property type="term" value="P:L-valine biosynthetic process"/>
    <property type="evidence" value="ECO:0007669"/>
    <property type="project" value="UniProtKB-UniRule"/>
</dbReference>
<dbReference type="FunFam" id="3.50.30.80:FF:000001">
    <property type="entry name" value="Dihydroxy-acid dehydratase"/>
    <property type="match status" value="1"/>
</dbReference>
<dbReference type="Gene3D" id="3.50.30.80">
    <property type="entry name" value="IlvD/EDD C-terminal domain-like"/>
    <property type="match status" value="1"/>
</dbReference>
<dbReference type="HAMAP" id="MF_00012">
    <property type="entry name" value="IlvD"/>
    <property type="match status" value="1"/>
</dbReference>
<dbReference type="InterPro" id="IPR042096">
    <property type="entry name" value="Dihydro-acid_dehy_C"/>
</dbReference>
<dbReference type="InterPro" id="IPR004404">
    <property type="entry name" value="DihydroxyA_deHydtase"/>
</dbReference>
<dbReference type="InterPro" id="IPR020558">
    <property type="entry name" value="DiOHA_6PGluconate_deHydtase_CS"/>
</dbReference>
<dbReference type="InterPro" id="IPR056740">
    <property type="entry name" value="ILV_EDD_C"/>
</dbReference>
<dbReference type="InterPro" id="IPR000581">
    <property type="entry name" value="ILV_EDD_N"/>
</dbReference>
<dbReference type="InterPro" id="IPR037237">
    <property type="entry name" value="IlvD/EDD_N"/>
</dbReference>
<dbReference type="NCBIfam" id="TIGR00110">
    <property type="entry name" value="ilvD"/>
    <property type="match status" value="1"/>
</dbReference>
<dbReference type="NCBIfam" id="NF009103">
    <property type="entry name" value="PRK12448.1"/>
    <property type="match status" value="1"/>
</dbReference>
<dbReference type="PANTHER" id="PTHR43661">
    <property type="entry name" value="D-XYLONATE DEHYDRATASE"/>
    <property type="match status" value="1"/>
</dbReference>
<dbReference type="PANTHER" id="PTHR43661:SF3">
    <property type="entry name" value="D-XYLONATE DEHYDRATASE YAGF-RELATED"/>
    <property type="match status" value="1"/>
</dbReference>
<dbReference type="Pfam" id="PF24877">
    <property type="entry name" value="ILV_EDD_C"/>
    <property type="match status" value="1"/>
</dbReference>
<dbReference type="Pfam" id="PF00920">
    <property type="entry name" value="ILVD_EDD_N"/>
    <property type="match status" value="1"/>
</dbReference>
<dbReference type="SUPFAM" id="SSF143975">
    <property type="entry name" value="IlvD/EDD N-terminal domain-like"/>
    <property type="match status" value="1"/>
</dbReference>
<dbReference type="SUPFAM" id="SSF52016">
    <property type="entry name" value="LeuD/IlvD-like"/>
    <property type="match status" value="1"/>
</dbReference>
<dbReference type="PROSITE" id="PS00886">
    <property type="entry name" value="ILVD_EDD_1"/>
    <property type="match status" value="1"/>
</dbReference>
<dbReference type="PROSITE" id="PS00887">
    <property type="entry name" value="ILVD_EDD_2"/>
    <property type="match status" value="1"/>
</dbReference>
<keyword id="KW-0001">2Fe-2S</keyword>
<keyword id="KW-0028">Amino-acid biosynthesis</keyword>
<keyword id="KW-0100">Branched-chain amino acid biosynthesis</keyword>
<keyword id="KW-0408">Iron</keyword>
<keyword id="KW-0411">Iron-sulfur</keyword>
<keyword id="KW-0456">Lyase</keyword>
<keyword id="KW-0460">Magnesium</keyword>
<keyword id="KW-0479">Metal-binding</keyword>